<reference key="1">
    <citation type="journal article" date="2002" name="Nature">
        <title>Comparison of the genomes of two Xanthomonas pathogens with differing host specificities.</title>
        <authorList>
            <person name="da Silva A.C.R."/>
            <person name="Ferro J.A."/>
            <person name="Reinach F.C."/>
            <person name="Farah C.S."/>
            <person name="Furlan L.R."/>
            <person name="Quaggio R.B."/>
            <person name="Monteiro-Vitorello C.B."/>
            <person name="Van Sluys M.A."/>
            <person name="Almeida N.F. Jr."/>
            <person name="Alves L.M.C."/>
            <person name="do Amaral A.M."/>
            <person name="Bertolini M.C."/>
            <person name="Camargo L.E.A."/>
            <person name="Camarotte G."/>
            <person name="Cannavan F."/>
            <person name="Cardozo J."/>
            <person name="Chambergo F."/>
            <person name="Ciapina L.P."/>
            <person name="Cicarelli R.M.B."/>
            <person name="Coutinho L.L."/>
            <person name="Cursino-Santos J.R."/>
            <person name="El-Dorry H."/>
            <person name="Faria J.B."/>
            <person name="Ferreira A.J.S."/>
            <person name="Ferreira R.C.C."/>
            <person name="Ferro M.I.T."/>
            <person name="Formighieri E.F."/>
            <person name="Franco M.C."/>
            <person name="Greggio C.C."/>
            <person name="Gruber A."/>
            <person name="Katsuyama A.M."/>
            <person name="Kishi L.T."/>
            <person name="Leite R.P."/>
            <person name="Lemos E.G.M."/>
            <person name="Lemos M.V.F."/>
            <person name="Locali E.C."/>
            <person name="Machado M.A."/>
            <person name="Madeira A.M.B.N."/>
            <person name="Martinez-Rossi N.M."/>
            <person name="Martins E.C."/>
            <person name="Meidanis J."/>
            <person name="Menck C.F.M."/>
            <person name="Miyaki C.Y."/>
            <person name="Moon D.H."/>
            <person name="Moreira L.M."/>
            <person name="Novo M.T.M."/>
            <person name="Okura V.K."/>
            <person name="Oliveira M.C."/>
            <person name="Oliveira V.R."/>
            <person name="Pereira H.A."/>
            <person name="Rossi A."/>
            <person name="Sena J.A.D."/>
            <person name="Silva C."/>
            <person name="de Souza R.F."/>
            <person name="Spinola L.A.F."/>
            <person name="Takita M.A."/>
            <person name="Tamura R.E."/>
            <person name="Teixeira E.C."/>
            <person name="Tezza R.I.D."/>
            <person name="Trindade dos Santos M."/>
            <person name="Truffi D."/>
            <person name="Tsai S.M."/>
            <person name="White F.F."/>
            <person name="Setubal J.C."/>
            <person name="Kitajima J.P."/>
        </authorList>
    </citation>
    <scope>NUCLEOTIDE SEQUENCE [LARGE SCALE GENOMIC DNA]</scope>
    <source>
        <strain>306</strain>
    </source>
</reference>
<dbReference type="EC" id="3.1.11.6" evidence="1"/>
<dbReference type="EMBL" id="AE008923">
    <property type="protein sequence ID" value="AAM37606.1"/>
    <property type="molecule type" value="Genomic_DNA"/>
</dbReference>
<dbReference type="RefSeq" id="WP_003486852.1">
    <property type="nucleotide sequence ID" value="NC_003919.1"/>
</dbReference>
<dbReference type="SMR" id="Q8PIY4"/>
<dbReference type="KEGG" id="xac:XAC2761"/>
<dbReference type="eggNOG" id="COG1722">
    <property type="taxonomic scope" value="Bacteria"/>
</dbReference>
<dbReference type="HOGENOM" id="CLU_145918_3_3_6"/>
<dbReference type="Proteomes" id="UP000000576">
    <property type="component" value="Chromosome"/>
</dbReference>
<dbReference type="GO" id="GO:0005829">
    <property type="term" value="C:cytosol"/>
    <property type="evidence" value="ECO:0007669"/>
    <property type="project" value="TreeGrafter"/>
</dbReference>
<dbReference type="GO" id="GO:0009318">
    <property type="term" value="C:exodeoxyribonuclease VII complex"/>
    <property type="evidence" value="ECO:0007669"/>
    <property type="project" value="InterPro"/>
</dbReference>
<dbReference type="GO" id="GO:0008855">
    <property type="term" value="F:exodeoxyribonuclease VII activity"/>
    <property type="evidence" value="ECO:0007669"/>
    <property type="project" value="UniProtKB-UniRule"/>
</dbReference>
<dbReference type="GO" id="GO:0006308">
    <property type="term" value="P:DNA catabolic process"/>
    <property type="evidence" value="ECO:0007669"/>
    <property type="project" value="UniProtKB-UniRule"/>
</dbReference>
<dbReference type="FunFam" id="1.10.287.1040:FF:000005">
    <property type="entry name" value="Exodeoxyribonuclease 7 small subunit"/>
    <property type="match status" value="1"/>
</dbReference>
<dbReference type="Gene3D" id="1.10.287.1040">
    <property type="entry name" value="Exonuclease VII, small subunit"/>
    <property type="match status" value="1"/>
</dbReference>
<dbReference type="HAMAP" id="MF_00337">
    <property type="entry name" value="Exonuc_7_S"/>
    <property type="match status" value="1"/>
</dbReference>
<dbReference type="InterPro" id="IPR003761">
    <property type="entry name" value="Exonuc_VII_S"/>
</dbReference>
<dbReference type="InterPro" id="IPR037004">
    <property type="entry name" value="Exonuc_VII_ssu_sf"/>
</dbReference>
<dbReference type="NCBIfam" id="NF002140">
    <property type="entry name" value="PRK00977.1-4"/>
    <property type="match status" value="1"/>
</dbReference>
<dbReference type="NCBIfam" id="TIGR01280">
    <property type="entry name" value="xseB"/>
    <property type="match status" value="1"/>
</dbReference>
<dbReference type="PANTHER" id="PTHR34137">
    <property type="entry name" value="EXODEOXYRIBONUCLEASE 7 SMALL SUBUNIT"/>
    <property type="match status" value="1"/>
</dbReference>
<dbReference type="PANTHER" id="PTHR34137:SF1">
    <property type="entry name" value="EXODEOXYRIBONUCLEASE 7 SMALL SUBUNIT"/>
    <property type="match status" value="1"/>
</dbReference>
<dbReference type="Pfam" id="PF02609">
    <property type="entry name" value="Exonuc_VII_S"/>
    <property type="match status" value="1"/>
</dbReference>
<dbReference type="PIRSF" id="PIRSF006488">
    <property type="entry name" value="Exonuc_VII_S"/>
    <property type="match status" value="1"/>
</dbReference>
<dbReference type="SUPFAM" id="SSF116842">
    <property type="entry name" value="XseB-like"/>
    <property type="match status" value="1"/>
</dbReference>
<organism>
    <name type="scientific">Xanthomonas axonopodis pv. citri (strain 306)</name>
    <dbReference type="NCBI Taxonomy" id="190486"/>
    <lineage>
        <taxon>Bacteria</taxon>
        <taxon>Pseudomonadati</taxon>
        <taxon>Pseudomonadota</taxon>
        <taxon>Gammaproteobacteria</taxon>
        <taxon>Lysobacterales</taxon>
        <taxon>Lysobacteraceae</taxon>
        <taxon>Xanthomonas</taxon>
    </lineage>
</organism>
<sequence length="86" mass="9678">MAKKSLNETSPVARFEQSLEELEQLVQKMEVGDLSLEQSLTAYERGIGLYRDCQQALEQAELRVRLLTDPARPELAEAFEPPSLDG</sequence>
<name>EX7S_XANAC</name>
<protein>
    <recommendedName>
        <fullName evidence="1">Exodeoxyribonuclease 7 small subunit</fullName>
        <ecNumber evidence="1">3.1.11.6</ecNumber>
    </recommendedName>
    <alternativeName>
        <fullName evidence="1">Exodeoxyribonuclease VII small subunit</fullName>
        <shortName evidence="1">Exonuclease VII small subunit</shortName>
    </alternativeName>
</protein>
<comment type="function">
    <text evidence="1">Bidirectionally degrades single-stranded DNA into large acid-insoluble oligonucleotides, which are then degraded further into small acid-soluble oligonucleotides.</text>
</comment>
<comment type="catalytic activity">
    <reaction evidence="1">
        <text>Exonucleolytic cleavage in either 5'- to 3'- or 3'- to 5'-direction to yield nucleoside 5'-phosphates.</text>
        <dbReference type="EC" id="3.1.11.6"/>
    </reaction>
</comment>
<comment type="subunit">
    <text evidence="1">Heterooligomer composed of large and small subunits.</text>
</comment>
<comment type="subcellular location">
    <subcellularLocation>
        <location evidence="1">Cytoplasm</location>
    </subcellularLocation>
</comment>
<comment type="similarity">
    <text evidence="1">Belongs to the XseB family.</text>
</comment>
<feature type="chain" id="PRO_0000207033" description="Exodeoxyribonuclease 7 small subunit">
    <location>
        <begin position="1"/>
        <end position="86"/>
    </location>
</feature>
<evidence type="ECO:0000255" key="1">
    <source>
        <dbReference type="HAMAP-Rule" id="MF_00337"/>
    </source>
</evidence>
<proteinExistence type="inferred from homology"/>
<keyword id="KW-0963">Cytoplasm</keyword>
<keyword id="KW-0269">Exonuclease</keyword>
<keyword id="KW-0378">Hydrolase</keyword>
<keyword id="KW-0540">Nuclease</keyword>
<accession>Q8PIY4</accession>
<gene>
    <name evidence="1" type="primary">xseB</name>
    <name type="ordered locus">XAC2761</name>
</gene>